<evidence type="ECO:0000255" key="1">
    <source>
        <dbReference type="HAMAP-Rule" id="MF_00097"/>
    </source>
</evidence>
<name>THIE_SALSV</name>
<proteinExistence type="inferred from homology"/>
<sequence>MYQPDFPTVPFRLGLYPVVDSVQWIERLLEAGVRTIQLRIKDKRDEEVEADIIAAIALGRRYDARLFINDYWRLAIKHRAYGVHLGQEDLETTDLEAIQAAGLRLGVSTHDDMEIDIALAAKPSYIALGHVFPTQTKQMPSAPQGLAQLASHIERLADYPTVAIGGISLERAPSVLATGVGSIAVVSAITQAADWRAATAQLLDIAGVGDE</sequence>
<comment type="function">
    <text evidence="1">Condenses 4-methyl-5-(beta-hydroxyethyl)thiazole monophosphate (THZ-P) and 2-methyl-4-amino-5-hydroxymethyl pyrimidine pyrophosphate (HMP-PP) to form thiamine monophosphate (TMP).</text>
</comment>
<comment type="catalytic activity">
    <reaction evidence="1">
        <text>2-[(2R,5Z)-2-carboxy-4-methylthiazol-5(2H)-ylidene]ethyl phosphate + 4-amino-2-methyl-5-(diphosphooxymethyl)pyrimidine + 2 H(+) = thiamine phosphate + CO2 + diphosphate</text>
        <dbReference type="Rhea" id="RHEA:47844"/>
        <dbReference type="ChEBI" id="CHEBI:15378"/>
        <dbReference type="ChEBI" id="CHEBI:16526"/>
        <dbReference type="ChEBI" id="CHEBI:33019"/>
        <dbReference type="ChEBI" id="CHEBI:37575"/>
        <dbReference type="ChEBI" id="CHEBI:57841"/>
        <dbReference type="ChEBI" id="CHEBI:62899"/>
        <dbReference type="EC" id="2.5.1.3"/>
    </reaction>
</comment>
<comment type="catalytic activity">
    <reaction evidence="1">
        <text>2-(2-carboxy-4-methylthiazol-5-yl)ethyl phosphate + 4-amino-2-methyl-5-(diphosphooxymethyl)pyrimidine + 2 H(+) = thiamine phosphate + CO2 + diphosphate</text>
        <dbReference type="Rhea" id="RHEA:47848"/>
        <dbReference type="ChEBI" id="CHEBI:15378"/>
        <dbReference type="ChEBI" id="CHEBI:16526"/>
        <dbReference type="ChEBI" id="CHEBI:33019"/>
        <dbReference type="ChEBI" id="CHEBI:37575"/>
        <dbReference type="ChEBI" id="CHEBI:57841"/>
        <dbReference type="ChEBI" id="CHEBI:62890"/>
        <dbReference type="EC" id="2.5.1.3"/>
    </reaction>
</comment>
<comment type="catalytic activity">
    <reaction evidence="1">
        <text>4-methyl-5-(2-phosphooxyethyl)-thiazole + 4-amino-2-methyl-5-(diphosphooxymethyl)pyrimidine + H(+) = thiamine phosphate + diphosphate</text>
        <dbReference type="Rhea" id="RHEA:22328"/>
        <dbReference type="ChEBI" id="CHEBI:15378"/>
        <dbReference type="ChEBI" id="CHEBI:33019"/>
        <dbReference type="ChEBI" id="CHEBI:37575"/>
        <dbReference type="ChEBI" id="CHEBI:57841"/>
        <dbReference type="ChEBI" id="CHEBI:58296"/>
        <dbReference type="EC" id="2.5.1.3"/>
    </reaction>
</comment>
<comment type="cofactor">
    <cofactor evidence="1">
        <name>Mg(2+)</name>
        <dbReference type="ChEBI" id="CHEBI:18420"/>
    </cofactor>
    <text evidence="1">Binds 1 Mg(2+) ion per subunit.</text>
</comment>
<comment type="pathway">
    <text evidence="1">Cofactor biosynthesis; thiamine diphosphate biosynthesis; thiamine phosphate from 4-amino-2-methyl-5-diphosphomethylpyrimidine and 4-methyl-5-(2-phosphoethyl)-thiazole: step 1/1.</text>
</comment>
<comment type="similarity">
    <text evidence="1">Belongs to the thiamine-phosphate synthase family.</text>
</comment>
<dbReference type="EC" id="2.5.1.3" evidence="1"/>
<dbReference type="EMBL" id="CP001127">
    <property type="protein sequence ID" value="ACF88670.1"/>
    <property type="molecule type" value="Genomic_DNA"/>
</dbReference>
<dbReference type="RefSeq" id="WP_000284649.1">
    <property type="nucleotide sequence ID" value="NC_011094.1"/>
</dbReference>
<dbReference type="SMR" id="B4TQK3"/>
<dbReference type="KEGG" id="sew:SeSA_A4373"/>
<dbReference type="HOGENOM" id="CLU_018272_3_3_6"/>
<dbReference type="UniPathway" id="UPA00060">
    <property type="reaction ID" value="UER00141"/>
</dbReference>
<dbReference type="Proteomes" id="UP000001865">
    <property type="component" value="Chromosome"/>
</dbReference>
<dbReference type="GO" id="GO:0005737">
    <property type="term" value="C:cytoplasm"/>
    <property type="evidence" value="ECO:0007669"/>
    <property type="project" value="TreeGrafter"/>
</dbReference>
<dbReference type="GO" id="GO:0000287">
    <property type="term" value="F:magnesium ion binding"/>
    <property type="evidence" value="ECO:0007669"/>
    <property type="project" value="UniProtKB-UniRule"/>
</dbReference>
<dbReference type="GO" id="GO:0004789">
    <property type="term" value="F:thiamine-phosphate diphosphorylase activity"/>
    <property type="evidence" value="ECO:0007669"/>
    <property type="project" value="UniProtKB-UniRule"/>
</dbReference>
<dbReference type="GO" id="GO:0009228">
    <property type="term" value="P:thiamine biosynthetic process"/>
    <property type="evidence" value="ECO:0007669"/>
    <property type="project" value="UniProtKB-KW"/>
</dbReference>
<dbReference type="GO" id="GO:0009229">
    <property type="term" value="P:thiamine diphosphate biosynthetic process"/>
    <property type="evidence" value="ECO:0007669"/>
    <property type="project" value="UniProtKB-UniRule"/>
</dbReference>
<dbReference type="CDD" id="cd00564">
    <property type="entry name" value="TMP_TenI"/>
    <property type="match status" value="1"/>
</dbReference>
<dbReference type="FunFam" id="3.20.20.70:FF:000064">
    <property type="entry name" value="Thiamine-phosphate synthase"/>
    <property type="match status" value="1"/>
</dbReference>
<dbReference type="Gene3D" id="3.20.20.70">
    <property type="entry name" value="Aldolase class I"/>
    <property type="match status" value="1"/>
</dbReference>
<dbReference type="HAMAP" id="MF_00097">
    <property type="entry name" value="TMP_synthase"/>
    <property type="match status" value="1"/>
</dbReference>
<dbReference type="InterPro" id="IPR013785">
    <property type="entry name" value="Aldolase_TIM"/>
</dbReference>
<dbReference type="InterPro" id="IPR036206">
    <property type="entry name" value="ThiamineP_synth_sf"/>
</dbReference>
<dbReference type="InterPro" id="IPR022998">
    <property type="entry name" value="ThiamineP_synth_TenI"/>
</dbReference>
<dbReference type="InterPro" id="IPR034291">
    <property type="entry name" value="TMP_synthase"/>
</dbReference>
<dbReference type="NCBIfam" id="NF002904">
    <property type="entry name" value="PRK03512.1"/>
    <property type="match status" value="1"/>
</dbReference>
<dbReference type="NCBIfam" id="TIGR00693">
    <property type="entry name" value="thiE"/>
    <property type="match status" value="1"/>
</dbReference>
<dbReference type="PANTHER" id="PTHR20857">
    <property type="entry name" value="THIAMINE-PHOSPHATE PYROPHOSPHORYLASE"/>
    <property type="match status" value="1"/>
</dbReference>
<dbReference type="PANTHER" id="PTHR20857:SF15">
    <property type="entry name" value="THIAMINE-PHOSPHATE SYNTHASE"/>
    <property type="match status" value="1"/>
</dbReference>
<dbReference type="Pfam" id="PF02581">
    <property type="entry name" value="TMP-TENI"/>
    <property type="match status" value="1"/>
</dbReference>
<dbReference type="SUPFAM" id="SSF51391">
    <property type="entry name" value="Thiamin phosphate synthase"/>
    <property type="match status" value="1"/>
</dbReference>
<feature type="chain" id="PRO_1000093690" description="Thiamine-phosphate synthase">
    <location>
        <begin position="1"/>
        <end position="211"/>
    </location>
</feature>
<feature type="binding site" evidence="1">
    <location>
        <begin position="37"/>
        <end position="41"/>
    </location>
    <ligand>
        <name>4-amino-2-methyl-5-(diphosphooxymethyl)pyrimidine</name>
        <dbReference type="ChEBI" id="CHEBI:57841"/>
    </ligand>
</feature>
<feature type="binding site" evidence="1">
    <location>
        <position position="69"/>
    </location>
    <ligand>
        <name>4-amino-2-methyl-5-(diphosphooxymethyl)pyrimidine</name>
        <dbReference type="ChEBI" id="CHEBI:57841"/>
    </ligand>
</feature>
<feature type="binding site" evidence="1">
    <location>
        <position position="70"/>
    </location>
    <ligand>
        <name>Mg(2+)</name>
        <dbReference type="ChEBI" id="CHEBI:18420"/>
    </ligand>
</feature>
<feature type="binding site" evidence="1">
    <location>
        <position position="89"/>
    </location>
    <ligand>
        <name>Mg(2+)</name>
        <dbReference type="ChEBI" id="CHEBI:18420"/>
    </ligand>
</feature>
<feature type="binding site" evidence="1">
    <location>
        <position position="108"/>
    </location>
    <ligand>
        <name>4-amino-2-methyl-5-(diphosphooxymethyl)pyrimidine</name>
        <dbReference type="ChEBI" id="CHEBI:57841"/>
    </ligand>
</feature>
<feature type="binding site" evidence="1">
    <location>
        <begin position="134"/>
        <end position="136"/>
    </location>
    <ligand>
        <name>2-[(2R,5Z)-2-carboxy-4-methylthiazol-5(2H)-ylidene]ethyl phosphate</name>
        <dbReference type="ChEBI" id="CHEBI:62899"/>
    </ligand>
</feature>
<feature type="binding site" evidence="1">
    <location>
        <position position="137"/>
    </location>
    <ligand>
        <name>4-amino-2-methyl-5-(diphosphooxymethyl)pyrimidine</name>
        <dbReference type="ChEBI" id="CHEBI:57841"/>
    </ligand>
</feature>
<feature type="binding site" evidence="1">
    <location>
        <position position="166"/>
    </location>
    <ligand>
        <name>2-[(2R,5Z)-2-carboxy-4-methylthiazol-5(2H)-ylidene]ethyl phosphate</name>
        <dbReference type="ChEBI" id="CHEBI:62899"/>
    </ligand>
</feature>
<feature type="binding site" evidence="1">
    <location>
        <begin position="186"/>
        <end position="187"/>
    </location>
    <ligand>
        <name>2-[(2R,5Z)-2-carboxy-4-methylthiazol-5(2H)-ylidene]ethyl phosphate</name>
        <dbReference type="ChEBI" id="CHEBI:62899"/>
    </ligand>
</feature>
<organism>
    <name type="scientific">Salmonella schwarzengrund (strain CVM19633)</name>
    <dbReference type="NCBI Taxonomy" id="439843"/>
    <lineage>
        <taxon>Bacteria</taxon>
        <taxon>Pseudomonadati</taxon>
        <taxon>Pseudomonadota</taxon>
        <taxon>Gammaproteobacteria</taxon>
        <taxon>Enterobacterales</taxon>
        <taxon>Enterobacteriaceae</taxon>
        <taxon>Salmonella</taxon>
    </lineage>
</organism>
<gene>
    <name evidence="1" type="primary">thiE</name>
    <name type="ordered locus">SeSA_A4373</name>
</gene>
<accession>B4TQK3</accession>
<protein>
    <recommendedName>
        <fullName evidence="1">Thiamine-phosphate synthase</fullName>
        <shortName evidence="1">TP synthase</shortName>
        <shortName evidence="1">TPS</shortName>
        <ecNumber evidence="1">2.5.1.3</ecNumber>
    </recommendedName>
    <alternativeName>
        <fullName evidence="1">Thiamine-phosphate pyrophosphorylase</fullName>
        <shortName evidence="1">TMP pyrophosphorylase</shortName>
        <shortName evidence="1">TMP-PPase</shortName>
    </alternativeName>
</protein>
<keyword id="KW-0460">Magnesium</keyword>
<keyword id="KW-0479">Metal-binding</keyword>
<keyword id="KW-0784">Thiamine biosynthesis</keyword>
<keyword id="KW-0808">Transferase</keyword>
<reference key="1">
    <citation type="journal article" date="2011" name="J. Bacteriol.">
        <title>Comparative genomics of 28 Salmonella enterica isolates: evidence for CRISPR-mediated adaptive sublineage evolution.</title>
        <authorList>
            <person name="Fricke W.F."/>
            <person name="Mammel M.K."/>
            <person name="McDermott P.F."/>
            <person name="Tartera C."/>
            <person name="White D.G."/>
            <person name="Leclerc J.E."/>
            <person name="Ravel J."/>
            <person name="Cebula T.A."/>
        </authorList>
    </citation>
    <scope>NUCLEOTIDE SEQUENCE [LARGE SCALE GENOMIC DNA]</scope>
    <source>
        <strain>CVM19633</strain>
    </source>
</reference>